<comment type="function">
    <text evidence="1">Catalyzes the conversion of glucosamine-6-phosphate to glucosamine-1-phosphate.</text>
</comment>
<comment type="catalytic activity">
    <reaction evidence="1">
        <text>alpha-D-glucosamine 1-phosphate = D-glucosamine 6-phosphate</text>
        <dbReference type="Rhea" id="RHEA:23424"/>
        <dbReference type="ChEBI" id="CHEBI:58516"/>
        <dbReference type="ChEBI" id="CHEBI:58725"/>
        <dbReference type="EC" id="5.4.2.10"/>
    </reaction>
</comment>
<comment type="cofactor">
    <cofactor evidence="1">
        <name>Mg(2+)</name>
        <dbReference type="ChEBI" id="CHEBI:18420"/>
    </cofactor>
    <text evidence="1">Binds 1 Mg(2+) ion per subunit.</text>
</comment>
<comment type="PTM">
    <text evidence="1">Activated by phosphorylation.</text>
</comment>
<comment type="similarity">
    <text evidence="1">Belongs to the phosphohexose mutase family.</text>
</comment>
<feature type="chain" id="PRO_1000185373" description="Phosphoglucosamine mutase">
    <location>
        <begin position="1"/>
        <end position="446"/>
    </location>
</feature>
<feature type="active site" description="Phosphoserine intermediate" evidence="1">
    <location>
        <position position="100"/>
    </location>
</feature>
<feature type="binding site" description="via phosphate group" evidence="1">
    <location>
        <position position="100"/>
    </location>
    <ligand>
        <name>Mg(2+)</name>
        <dbReference type="ChEBI" id="CHEBI:18420"/>
    </ligand>
</feature>
<feature type="binding site" evidence="1">
    <location>
        <position position="241"/>
    </location>
    <ligand>
        <name>Mg(2+)</name>
        <dbReference type="ChEBI" id="CHEBI:18420"/>
    </ligand>
</feature>
<feature type="binding site" evidence="1">
    <location>
        <position position="243"/>
    </location>
    <ligand>
        <name>Mg(2+)</name>
        <dbReference type="ChEBI" id="CHEBI:18420"/>
    </ligand>
</feature>
<feature type="binding site" evidence="1">
    <location>
        <position position="245"/>
    </location>
    <ligand>
        <name>Mg(2+)</name>
        <dbReference type="ChEBI" id="CHEBI:18420"/>
    </ligand>
</feature>
<feature type="modified residue" description="Phosphoserine" evidence="1">
    <location>
        <position position="100"/>
    </location>
</feature>
<keyword id="KW-0413">Isomerase</keyword>
<keyword id="KW-0460">Magnesium</keyword>
<keyword id="KW-0479">Metal-binding</keyword>
<keyword id="KW-0597">Phosphoprotein</keyword>
<name>GLMM_METC4</name>
<sequence length="446" mass="48510">MRKHFGTDGIRGRANVVITPELALKVGQAAGVIFQRGDHRHRVVIGKDTRLSGYMIETALVAGFTSVGMDVLLLGPMPTPAVAMLTRSMRADIGVMISASHNPYEDNGIKLFGPDGFKLNDDLELEIESLIDGDMRNRLSASRDLGRAKRIESVHARYIEFAKRTLPRHVTLDGLRVVVDCANGAAYRVAPETLWELGAEVISIGVEPDGFNINHDVGSTAPETLVQKVRELRADVGIALDGDADRVLIVDEKGQKVDGDQLMAAVARSWQEDERLTQPGLVATIMSNLGLERYINSIGLTLARTAVGDRYVLEHMRQHGYNLGGEQSGHIIMSDYATTGDGLVAALQLLSVVKRRNLPVSEVCHCFEPLPQILKNVRFRSGEPLRADSVVTAIAHAKDRLGQSGRLVIRPSGTEPVIRVMAEGDDRDLVAEVVDEVVDAVTRAAA</sequence>
<proteinExistence type="inferred from homology"/>
<evidence type="ECO:0000255" key="1">
    <source>
        <dbReference type="HAMAP-Rule" id="MF_01554"/>
    </source>
</evidence>
<reference key="1">
    <citation type="submission" date="2008-12" db="EMBL/GenBank/DDBJ databases">
        <title>Complete sequence of chromosome of Methylobacterium chloromethanicum CM4.</title>
        <authorList>
            <consortium name="US DOE Joint Genome Institute"/>
            <person name="Lucas S."/>
            <person name="Copeland A."/>
            <person name="Lapidus A."/>
            <person name="Glavina del Rio T."/>
            <person name="Dalin E."/>
            <person name="Tice H."/>
            <person name="Bruce D."/>
            <person name="Goodwin L."/>
            <person name="Pitluck S."/>
            <person name="Chertkov O."/>
            <person name="Brettin T."/>
            <person name="Detter J.C."/>
            <person name="Han C."/>
            <person name="Larimer F."/>
            <person name="Land M."/>
            <person name="Hauser L."/>
            <person name="Kyrpides N."/>
            <person name="Mikhailova N."/>
            <person name="Marx C."/>
            <person name="Richardson P."/>
        </authorList>
    </citation>
    <scope>NUCLEOTIDE SEQUENCE [LARGE SCALE GENOMIC DNA]</scope>
    <source>
        <strain>CM4 / NCIMB 13688</strain>
    </source>
</reference>
<gene>
    <name evidence="1" type="primary">glmM</name>
    <name type="ordered locus">Mchl_5306</name>
</gene>
<protein>
    <recommendedName>
        <fullName evidence="1">Phosphoglucosamine mutase</fullName>
        <ecNumber evidence="1">5.4.2.10</ecNumber>
    </recommendedName>
</protein>
<organism>
    <name type="scientific">Methylorubrum extorquens (strain CM4 / NCIMB 13688)</name>
    <name type="common">Methylobacterium extorquens</name>
    <dbReference type="NCBI Taxonomy" id="440085"/>
    <lineage>
        <taxon>Bacteria</taxon>
        <taxon>Pseudomonadati</taxon>
        <taxon>Pseudomonadota</taxon>
        <taxon>Alphaproteobacteria</taxon>
        <taxon>Hyphomicrobiales</taxon>
        <taxon>Methylobacteriaceae</taxon>
        <taxon>Methylorubrum</taxon>
    </lineage>
</organism>
<dbReference type="EC" id="5.4.2.10" evidence="1"/>
<dbReference type="EMBL" id="CP001298">
    <property type="protein sequence ID" value="ACK86068.1"/>
    <property type="molecule type" value="Genomic_DNA"/>
</dbReference>
<dbReference type="RefSeq" id="WP_003601519.1">
    <property type="nucleotide sequence ID" value="NC_011757.1"/>
</dbReference>
<dbReference type="SMR" id="B7KWJ1"/>
<dbReference type="GeneID" id="72992570"/>
<dbReference type="KEGG" id="mch:Mchl_5306"/>
<dbReference type="HOGENOM" id="CLU_016950_7_0_5"/>
<dbReference type="Proteomes" id="UP000002385">
    <property type="component" value="Chromosome"/>
</dbReference>
<dbReference type="GO" id="GO:0005829">
    <property type="term" value="C:cytosol"/>
    <property type="evidence" value="ECO:0007669"/>
    <property type="project" value="TreeGrafter"/>
</dbReference>
<dbReference type="GO" id="GO:0000287">
    <property type="term" value="F:magnesium ion binding"/>
    <property type="evidence" value="ECO:0007669"/>
    <property type="project" value="UniProtKB-UniRule"/>
</dbReference>
<dbReference type="GO" id="GO:0008966">
    <property type="term" value="F:phosphoglucosamine mutase activity"/>
    <property type="evidence" value="ECO:0007669"/>
    <property type="project" value="UniProtKB-UniRule"/>
</dbReference>
<dbReference type="GO" id="GO:0004615">
    <property type="term" value="F:phosphomannomutase activity"/>
    <property type="evidence" value="ECO:0007669"/>
    <property type="project" value="TreeGrafter"/>
</dbReference>
<dbReference type="GO" id="GO:0005975">
    <property type="term" value="P:carbohydrate metabolic process"/>
    <property type="evidence" value="ECO:0007669"/>
    <property type="project" value="InterPro"/>
</dbReference>
<dbReference type="GO" id="GO:0009252">
    <property type="term" value="P:peptidoglycan biosynthetic process"/>
    <property type="evidence" value="ECO:0007669"/>
    <property type="project" value="TreeGrafter"/>
</dbReference>
<dbReference type="GO" id="GO:0006048">
    <property type="term" value="P:UDP-N-acetylglucosamine biosynthetic process"/>
    <property type="evidence" value="ECO:0007669"/>
    <property type="project" value="TreeGrafter"/>
</dbReference>
<dbReference type="CDD" id="cd05802">
    <property type="entry name" value="GlmM"/>
    <property type="match status" value="1"/>
</dbReference>
<dbReference type="FunFam" id="3.30.310.50:FF:000001">
    <property type="entry name" value="Phosphoglucosamine mutase"/>
    <property type="match status" value="1"/>
</dbReference>
<dbReference type="FunFam" id="3.40.120.10:FF:000001">
    <property type="entry name" value="Phosphoglucosamine mutase"/>
    <property type="match status" value="1"/>
</dbReference>
<dbReference type="FunFam" id="3.40.120.10:FF:000002">
    <property type="entry name" value="Phosphoglucosamine mutase"/>
    <property type="match status" value="1"/>
</dbReference>
<dbReference type="Gene3D" id="3.40.120.10">
    <property type="entry name" value="Alpha-D-Glucose-1,6-Bisphosphate, subunit A, domain 3"/>
    <property type="match status" value="3"/>
</dbReference>
<dbReference type="Gene3D" id="3.30.310.50">
    <property type="entry name" value="Alpha-D-phosphohexomutase, C-terminal domain"/>
    <property type="match status" value="1"/>
</dbReference>
<dbReference type="HAMAP" id="MF_01554_B">
    <property type="entry name" value="GlmM_B"/>
    <property type="match status" value="1"/>
</dbReference>
<dbReference type="InterPro" id="IPR005844">
    <property type="entry name" value="A-D-PHexomutase_a/b/a-I"/>
</dbReference>
<dbReference type="InterPro" id="IPR016055">
    <property type="entry name" value="A-D-PHexomutase_a/b/a-I/II/III"/>
</dbReference>
<dbReference type="InterPro" id="IPR005845">
    <property type="entry name" value="A-D-PHexomutase_a/b/a-II"/>
</dbReference>
<dbReference type="InterPro" id="IPR005846">
    <property type="entry name" value="A-D-PHexomutase_a/b/a-III"/>
</dbReference>
<dbReference type="InterPro" id="IPR005843">
    <property type="entry name" value="A-D-PHexomutase_C"/>
</dbReference>
<dbReference type="InterPro" id="IPR036900">
    <property type="entry name" value="A-D-PHexomutase_C_sf"/>
</dbReference>
<dbReference type="InterPro" id="IPR016066">
    <property type="entry name" value="A-D-PHexomutase_CS"/>
</dbReference>
<dbReference type="InterPro" id="IPR005841">
    <property type="entry name" value="Alpha-D-phosphohexomutase_SF"/>
</dbReference>
<dbReference type="InterPro" id="IPR006352">
    <property type="entry name" value="GlmM_bact"/>
</dbReference>
<dbReference type="InterPro" id="IPR050060">
    <property type="entry name" value="Phosphoglucosamine_mutase"/>
</dbReference>
<dbReference type="NCBIfam" id="TIGR01455">
    <property type="entry name" value="glmM"/>
    <property type="match status" value="1"/>
</dbReference>
<dbReference type="NCBIfam" id="NF008139">
    <property type="entry name" value="PRK10887.1"/>
    <property type="match status" value="1"/>
</dbReference>
<dbReference type="PANTHER" id="PTHR42946:SF1">
    <property type="entry name" value="PHOSPHOGLUCOMUTASE (ALPHA-D-GLUCOSE-1,6-BISPHOSPHATE-DEPENDENT)"/>
    <property type="match status" value="1"/>
</dbReference>
<dbReference type="PANTHER" id="PTHR42946">
    <property type="entry name" value="PHOSPHOHEXOSE MUTASE"/>
    <property type="match status" value="1"/>
</dbReference>
<dbReference type="Pfam" id="PF02878">
    <property type="entry name" value="PGM_PMM_I"/>
    <property type="match status" value="1"/>
</dbReference>
<dbReference type="Pfam" id="PF02879">
    <property type="entry name" value="PGM_PMM_II"/>
    <property type="match status" value="1"/>
</dbReference>
<dbReference type="Pfam" id="PF02880">
    <property type="entry name" value="PGM_PMM_III"/>
    <property type="match status" value="1"/>
</dbReference>
<dbReference type="Pfam" id="PF00408">
    <property type="entry name" value="PGM_PMM_IV"/>
    <property type="match status" value="1"/>
</dbReference>
<dbReference type="PRINTS" id="PR00509">
    <property type="entry name" value="PGMPMM"/>
</dbReference>
<dbReference type="SUPFAM" id="SSF55957">
    <property type="entry name" value="Phosphoglucomutase, C-terminal domain"/>
    <property type="match status" value="1"/>
</dbReference>
<dbReference type="SUPFAM" id="SSF53738">
    <property type="entry name" value="Phosphoglucomutase, first 3 domains"/>
    <property type="match status" value="3"/>
</dbReference>
<dbReference type="PROSITE" id="PS00710">
    <property type="entry name" value="PGM_PMM"/>
    <property type="match status" value="1"/>
</dbReference>
<accession>B7KWJ1</accession>